<proteinExistence type="inferred from homology"/>
<protein>
    <recommendedName>
        <fullName evidence="1">Na(+)-translocating NADH-quinone reductase subunit D</fullName>
        <shortName evidence="1">Na(+)-NQR subunit D</shortName>
        <shortName evidence="1">Na(+)-translocating NQR subunit D</shortName>
        <ecNumber evidence="1">7.2.1.1</ecNumber>
    </recommendedName>
    <alternativeName>
        <fullName evidence="1">NQR complex subunit D</fullName>
    </alternativeName>
    <alternativeName>
        <fullName evidence="1">NQR-1 subunit D</fullName>
    </alternativeName>
</protein>
<sequence>MADSKEIKRVLLSPLFDNNPIALQILGVCSALAVTTKLETALVMTLAVTLVTAFSSFFISLIRNHIPNSVRIIVQMVIIASLVIVVDQVLRAYAYEISKQLSVFVGLIITNCIVMGRAEAYAMKSPPIESFMDGIGNGLGYGVILVLVGFVRELVGSGKLFGVTVLETVQNGGWYLPNGLFLLAPSAFFIIGLLIWGLRTLKPAQIEKE</sequence>
<reference key="1">
    <citation type="submission" date="2008-04" db="EMBL/GenBank/DDBJ databases">
        <title>Complete sequence of Yersinia pseudotuberculosis PB1/+.</title>
        <authorList>
            <person name="Copeland A."/>
            <person name="Lucas S."/>
            <person name="Lapidus A."/>
            <person name="Glavina del Rio T."/>
            <person name="Dalin E."/>
            <person name="Tice H."/>
            <person name="Bruce D."/>
            <person name="Goodwin L."/>
            <person name="Pitluck S."/>
            <person name="Munk A.C."/>
            <person name="Brettin T."/>
            <person name="Detter J.C."/>
            <person name="Han C."/>
            <person name="Tapia R."/>
            <person name="Schmutz J."/>
            <person name="Larimer F."/>
            <person name="Land M."/>
            <person name="Hauser L."/>
            <person name="Challacombe J.F."/>
            <person name="Green L."/>
            <person name="Lindler L.E."/>
            <person name="Nikolich M.P."/>
            <person name="Richardson P."/>
        </authorList>
    </citation>
    <scope>NUCLEOTIDE SEQUENCE [LARGE SCALE GENOMIC DNA]</scope>
    <source>
        <strain>PB1/+</strain>
    </source>
</reference>
<evidence type="ECO:0000255" key="1">
    <source>
        <dbReference type="HAMAP-Rule" id="MF_00428"/>
    </source>
</evidence>
<accession>B2K647</accession>
<name>NQRD_YERPB</name>
<gene>
    <name evidence="1" type="primary">nqrD</name>
    <name type="ordered locus">YPTS_0932</name>
</gene>
<keyword id="KW-0997">Cell inner membrane</keyword>
<keyword id="KW-1003">Cell membrane</keyword>
<keyword id="KW-0406">Ion transport</keyword>
<keyword id="KW-0472">Membrane</keyword>
<keyword id="KW-0520">NAD</keyword>
<keyword id="KW-0915">Sodium</keyword>
<keyword id="KW-0739">Sodium transport</keyword>
<keyword id="KW-1278">Translocase</keyword>
<keyword id="KW-0812">Transmembrane</keyword>
<keyword id="KW-1133">Transmembrane helix</keyword>
<keyword id="KW-0813">Transport</keyword>
<keyword id="KW-0830">Ubiquinone</keyword>
<comment type="function">
    <text evidence="1">NQR complex catalyzes the reduction of ubiquinone-1 to ubiquinol by two successive reactions, coupled with the transport of Na(+) ions from the cytoplasm to the periplasm. NqrA to NqrE are probably involved in the second step, the conversion of ubisemiquinone to ubiquinol.</text>
</comment>
<comment type="catalytic activity">
    <reaction evidence="1">
        <text>a ubiquinone + n Na(+)(in) + NADH + H(+) = a ubiquinol + n Na(+)(out) + NAD(+)</text>
        <dbReference type="Rhea" id="RHEA:47748"/>
        <dbReference type="Rhea" id="RHEA-COMP:9565"/>
        <dbReference type="Rhea" id="RHEA-COMP:9566"/>
        <dbReference type="ChEBI" id="CHEBI:15378"/>
        <dbReference type="ChEBI" id="CHEBI:16389"/>
        <dbReference type="ChEBI" id="CHEBI:17976"/>
        <dbReference type="ChEBI" id="CHEBI:29101"/>
        <dbReference type="ChEBI" id="CHEBI:57540"/>
        <dbReference type="ChEBI" id="CHEBI:57945"/>
        <dbReference type="EC" id="7.2.1.1"/>
    </reaction>
</comment>
<comment type="subunit">
    <text evidence="1">Composed of six subunits; NqrA, NqrB, NqrC, NqrD, NqrE and NqrF.</text>
</comment>
<comment type="subcellular location">
    <subcellularLocation>
        <location evidence="1">Cell inner membrane</location>
        <topology evidence="1">Multi-pass membrane protein</topology>
    </subcellularLocation>
</comment>
<comment type="similarity">
    <text evidence="1">Belongs to the NqrDE/RnfAE family.</text>
</comment>
<dbReference type="EC" id="7.2.1.1" evidence="1"/>
<dbReference type="EMBL" id="CP001048">
    <property type="protein sequence ID" value="ACC87913.1"/>
    <property type="molecule type" value="Genomic_DNA"/>
</dbReference>
<dbReference type="RefSeq" id="WP_002208714.1">
    <property type="nucleotide sequence ID" value="NZ_CP009780.1"/>
</dbReference>
<dbReference type="SMR" id="B2K647"/>
<dbReference type="KEGG" id="ypb:YPTS_0932"/>
<dbReference type="PATRIC" id="fig|502801.10.peg.267"/>
<dbReference type="GO" id="GO:0005886">
    <property type="term" value="C:plasma membrane"/>
    <property type="evidence" value="ECO:0007669"/>
    <property type="project" value="UniProtKB-SubCell"/>
</dbReference>
<dbReference type="GO" id="GO:0016655">
    <property type="term" value="F:oxidoreductase activity, acting on NAD(P)H, quinone or similar compound as acceptor"/>
    <property type="evidence" value="ECO:0007669"/>
    <property type="project" value="UniProtKB-UniRule"/>
</dbReference>
<dbReference type="GO" id="GO:0006814">
    <property type="term" value="P:sodium ion transport"/>
    <property type="evidence" value="ECO:0007669"/>
    <property type="project" value="UniProtKB-UniRule"/>
</dbReference>
<dbReference type="HAMAP" id="MF_00428">
    <property type="entry name" value="NqrD"/>
    <property type="match status" value="1"/>
</dbReference>
<dbReference type="InterPro" id="IPR011292">
    <property type="entry name" value="NqrD"/>
</dbReference>
<dbReference type="InterPro" id="IPR003667">
    <property type="entry name" value="NqrDE/RnfAE"/>
</dbReference>
<dbReference type="NCBIfam" id="TIGR01939">
    <property type="entry name" value="nqrD"/>
    <property type="match status" value="1"/>
</dbReference>
<dbReference type="NCBIfam" id="NF006777">
    <property type="entry name" value="PRK09292.1"/>
    <property type="match status" value="1"/>
</dbReference>
<dbReference type="NCBIfam" id="NF009070">
    <property type="entry name" value="PRK12405.1"/>
    <property type="match status" value="1"/>
</dbReference>
<dbReference type="PANTHER" id="PTHR30586">
    <property type="entry name" value="ELECTRON TRANSPORT COMPLEX PROTEIN RNFE"/>
    <property type="match status" value="1"/>
</dbReference>
<dbReference type="PANTHER" id="PTHR30586:SF1">
    <property type="entry name" value="NA(+)-TRANSLOCATING NADH-QUINONE REDUCTASE SUBUNIT D"/>
    <property type="match status" value="1"/>
</dbReference>
<dbReference type="Pfam" id="PF02508">
    <property type="entry name" value="Rnf-Nqr"/>
    <property type="match status" value="1"/>
</dbReference>
<dbReference type="PIRSF" id="PIRSF006102">
    <property type="entry name" value="NQR_DE"/>
    <property type="match status" value="1"/>
</dbReference>
<feature type="chain" id="PRO_1000191693" description="Na(+)-translocating NADH-quinone reductase subunit D">
    <location>
        <begin position="1"/>
        <end position="209"/>
    </location>
</feature>
<feature type="transmembrane region" description="Helical" evidence="1">
    <location>
        <begin position="42"/>
        <end position="62"/>
    </location>
</feature>
<feature type="transmembrane region" description="Helical" evidence="1">
    <location>
        <begin position="66"/>
        <end position="86"/>
    </location>
</feature>
<feature type="transmembrane region" description="Helical" evidence="1">
    <location>
        <begin position="103"/>
        <end position="123"/>
    </location>
</feature>
<feature type="transmembrane region" description="Helical" evidence="1">
    <location>
        <begin position="131"/>
        <end position="151"/>
    </location>
</feature>
<feature type="transmembrane region" description="Helical" evidence="1">
    <location>
        <begin position="178"/>
        <end position="198"/>
    </location>
</feature>
<organism>
    <name type="scientific">Yersinia pseudotuberculosis serotype IB (strain PB1/+)</name>
    <dbReference type="NCBI Taxonomy" id="502801"/>
    <lineage>
        <taxon>Bacteria</taxon>
        <taxon>Pseudomonadati</taxon>
        <taxon>Pseudomonadota</taxon>
        <taxon>Gammaproteobacteria</taxon>
        <taxon>Enterobacterales</taxon>
        <taxon>Yersiniaceae</taxon>
        <taxon>Yersinia</taxon>
    </lineage>
</organism>